<evidence type="ECO:0000256" key="1">
    <source>
        <dbReference type="SAM" id="MobiDB-lite"/>
    </source>
</evidence>
<evidence type="ECO:0000269" key="2">
    <source>
    </source>
</evidence>
<evidence type="ECO:0000269" key="3">
    <source>
    </source>
</evidence>
<evidence type="ECO:0000269" key="4">
    <source>
    </source>
</evidence>
<evidence type="ECO:0000269" key="5">
    <source>
    </source>
</evidence>
<evidence type="ECO:0000269" key="6">
    <source>
    </source>
</evidence>
<evidence type="ECO:0000269" key="7">
    <source>
    </source>
</evidence>
<evidence type="ECO:0000305" key="8"/>
<evidence type="ECO:0007744" key="9">
    <source>
    </source>
</evidence>
<evidence type="ECO:0007744" key="10">
    <source>
    </source>
</evidence>
<evidence type="ECO:0007744" key="11">
    <source>
    </source>
</evidence>
<organism>
    <name type="scientific">Saccharomyces cerevisiae (strain ATCC 204508 / S288c)</name>
    <name type="common">Baker's yeast</name>
    <dbReference type="NCBI Taxonomy" id="559292"/>
    <lineage>
        <taxon>Eukaryota</taxon>
        <taxon>Fungi</taxon>
        <taxon>Dikarya</taxon>
        <taxon>Ascomycota</taxon>
        <taxon>Saccharomycotina</taxon>
        <taxon>Saccharomycetes</taxon>
        <taxon>Saccharomycetales</taxon>
        <taxon>Saccharomycetaceae</taxon>
        <taxon>Saccharomyces</taxon>
    </lineage>
</organism>
<comment type="function">
    <text evidence="2 3 4 5 6 7">Component of the SRB8-11 complex. The SRB8-11 complex is a regulatory module of the Mediator complex which is itself involved in regulation of basal and activated RNA polymerase II-dependent transcription. The SRB8-11 complex may be involved in the transcriptional repression of a subset of genes regulated by Mediator. It may inhibit the association of the Mediator complex with RNA polymerase II to form the holoenzyme complex. The SRB8-11 complex phosphorylates the C-terminal domain (CTD) of the largest subunit of RNA polymerase II RPB1 at serines 2 and 5.</text>
</comment>
<comment type="subunit">
    <text evidence="2">Component of the SRB8-11 complex which consists of SRB8, SSN2/SRB9, SSN3/SRB10 and SSN8/SRB11. The SRB8-11 complex associates with the Mediator complex. The SSN3/SRB10 and SSN8/SRB11 kinase-cyclin pair also associate with the RNA polymerase II holoenzyme.</text>
</comment>
<comment type="interaction">
    <interactant intactId="EBI-18059">
        <id>P38931</id>
    </interactant>
    <interactant intactId="EBI-19168">
        <id>P07273</id>
        <label>DST1</label>
    </interactant>
    <organismsDiffer>false</organismsDiffer>
    <experiments>2</experiments>
</comment>
<comment type="interaction">
    <interactant intactId="EBI-18059">
        <id>P38931</id>
    </interactant>
    <interactant intactId="EBI-18025">
        <id>P32569</id>
        <label>SRB4</label>
    </interactant>
    <organismsDiffer>false</organismsDiffer>
    <experiments>3</experiments>
</comment>
<comment type="subcellular location">
    <subcellularLocation>
        <location evidence="8">Nucleus</location>
    </subcellularLocation>
</comment>
<comment type="PTM">
    <text evidence="3">Phosphorylated. PKA-dependent phosphorylation at 'Ser-608' is enhanced by activation of the RAS signaling pathway.</text>
</comment>
<comment type="similarity">
    <text evidence="8">Belongs to the Mediator complex subunit 13 family.</text>
</comment>
<proteinExistence type="evidence at protein level"/>
<keyword id="KW-0002">3D-structure</keyword>
<keyword id="KW-0010">Activator</keyword>
<keyword id="KW-0539">Nucleus</keyword>
<keyword id="KW-0597">Phosphoprotein</keyword>
<keyword id="KW-1185">Reference proteome</keyword>
<keyword id="KW-0678">Repressor</keyword>
<keyword id="KW-0804">Transcription</keyword>
<keyword id="KW-0805">Transcription regulation</keyword>
<gene>
    <name type="primary">SSN2</name>
    <name type="synonym">MED13</name>
    <name type="synonym">NUT8</name>
    <name type="synonym">RYE3</name>
    <name type="synonym">SCA1</name>
    <name type="synonym">SRB9</name>
    <name type="synonym">UME2</name>
    <name type="ordered locus">YDR443C</name>
</gene>
<name>SSN2_YEAST</name>
<accession>P38931</accession>
<accession>D6VT69</accession>
<sequence length="1420" mass="160001">MSSDASTYRLEDVLSSFYRVEKIKKINYHQYISKAQNDQWSIQMEFMLRKQDPKTLVALLSRDLWCFSINDDPVPTPPAIEHKPVSPDKIGTFTADYSKPNLPPHYALFLKALRRKIYINLALGSHNKLIQFGNACISLSGVPNYLVQLEPHLFVNGDLTVSLCAKNMGLVPMKEENLEESFLSKHALYLAPSGIRMHLAPASKQGYLITPPKHTELLLTTLSVSHGINLQNKKNLKWVAVVPDLGHLNGHTPTIASYLTPLLEAKKLVWPLHLIFAQPVADIENSTSGDPSEFHCLQDALDAIDDFIQLKQTAAYRTPGSSGVLSSNIAGTNPLSSDGAYTEQFQHYKNNSISSQPASYHSVQETNKISPKDFSPNFTGIDKLMLSPSDQFAPAFLNTPNNNINENELFNDRKQTTVSNDLENSPLKTELEANGRSLEKVNNSVSKTGSVDTLHNKEGTLEQREQNENLPSDKSDSMVDKELFGEDEDEDLFGDSNKSNSTNESNKSISDEITEDMFEMSDEEENNNNKSINKNNKEMHTDLGKDIPFFPSSEKPNIRTMSGTTKRLNGKRKYLDIPIDEMTLPTSPLYMDPGAPLPVETPRDRRKSVFAPLNFNPIIENNVDNKYKSGGKFSFSPLQKEEALNFDISMADLSSSEEEEDEEENGSSDEDLKSLNVRDDMKPSDNISTNTNIHEPQYINYSSIPSLQDSIIKQENFNSVNDANITSNKEGFNSIWKIPQNDIPQTESPLKTVDSSIQPIESNIKMTLEDNNVTSNPSEFTPNMVNSEISNLPKDKSGIPEFTPADPNLSFESSSSLPFLLRHMPLASIPDIFITPTPVVTISEKEQDILDLIAEQVVTDYNILGNLGIPKIAYRGVKDCQEGLITTTMLQLFSTFDRLNGNDTISKFYNMKQPYVFVKKHHELIKVKHDSQPFIKFLNFRPPNGIKNFKSLLLSSSFKEDCLSFAPTLSQTYINQELGFCELLKLTNEDPPGLMYLKAFDKNKLLLLAAQIVSYCSNNKNSIKNVPPILIILPLDNATLTELVDKANIFQVIKNEVCAKMPNIELYLKVIPMDFIRNVLVTVDQYVNVAISIYNMLPPKSVKFTHIAHTLPEKVNFRTMQQQQMQQQQQQQQQQQNNSTGSSSIIYYDSYIHLAYSRSVDKEWVFAALSDSYGQGSMTKTWYVGNSRGKFDDACNQIWNIALNLASKKFGKICLILTRLNGILPDDELMNWRRLSGRNIHLAVVCVDDNSKISFIDEDKLYPSFKPIYKDTRFGGRMDMTRLYDYEIRDIDQDIHGIVFQHPFPLAHSQHRCAIRSGALIKFKKCDGDTVWDKFAVNLLNCPHSDSTQLLETILEEFRNLAALNVWYGLSDGEDGHIPWHILAVKKMMNTLVHTRVKIANTSAATVHTATSSSIILSDK</sequence>
<reference key="1">
    <citation type="journal article" date="1995" name="Genes Dev.">
        <title>Association of an activator with an RNA polymerase II holoenzyme.</title>
        <authorList>
            <person name="Hengartner C.J."/>
            <person name="Thompson C.M."/>
            <person name="Zhang J."/>
            <person name="Chao D.M."/>
            <person name="Liao S.-M."/>
            <person name="Koleske A.J."/>
            <person name="Okamura S."/>
            <person name="Young R.A."/>
        </authorList>
    </citation>
    <scope>NUCLEOTIDE SEQUENCE [GENOMIC DNA]</scope>
    <source>
        <strain>ATCC 204508 / S288c</strain>
    </source>
</reference>
<reference key="2">
    <citation type="journal article" date="1996" name="Genetics">
        <title>Suppression analysis reveals a functional difference between the serines in positions two and five in the consensus sequence of the C-terminal domain of yeast RNA polymerase II.</title>
        <authorList>
            <person name="Yuryev A."/>
            <person name="Corden J.L."/>
        </authorList>
    </citation>
    <scope>NUCLEOTIDE SEQUENCE</scope>
</reference>
<reference key="3">
    <citation type="journal article" date="1997" name="Nature">
        <title>The nucleotide sequence of Saccharomyces cerevisiae chromosome IV.</title>
        <authorList>
            <person name="Jacq C."/>
            <person name="Alt-Moerbe J."/>
            <person name="Andre B."/>
            <person name="Arnold W."/>
            <person name="Bahr A."/>
            <person name="Ballesta J.P.G."/>
            <person name="Bargues M."/>
            <person name="Baron L."/>
            <person name="Becker A."/>
            <person name="Biteau N."/>
            <person name="Bloecker H."/>
            <person name="Blugeon C."/>
            <person name="Boskovic J."/>
            <person name="Brandt P."/>
            <person name="Brueckner M."/>
            <person name="Buitrago M.J."/>
            <person name="Coster F."/>
            <person name="Delaveau T."/>
            <person name="del Rey F."/>
            <person name="Dujon B."/>
            <person name="Eide L.G."/>
            <person name="Garcia-Cantalejo J.M."/>
            <person name="Goffeau A."/>
            <person name="Gomez-Peris A."/>
            <person name="Granotier C."/>
            <person name="Hanemann V."/>
            <person name="Hankeln T."/>
            <person name="Hoheisel J.D."/>
            <person name="Jaeger W."/>
            <person name="Jimenez A."/>
            <person name="Jonniaux J.-L."/>
            <person name="Kraemer C."/>
            <person name="Kuester H."/>
            <person name="Laamanen P."/>
            <person name="Legros Y."/>
            <person name="Louis E.J."/>
            <person name="Moeller-Rieker S."/>
            <person name="Monnet A."/>
            <person name="Moro M."/>
            <person name="Mueller-Auer S."/>
            <person name="Nussbaumer B."/>
            <person name="Paricio N."/>
            <person name="Paulin L."/>
            <person name="Perea J."/>
            <person name="Perez-Alonso M."/>
            <person name="Perez-Ortin J.E."/>
            <person name="Pohl T.M."/>
            <person name="Prydz H."/>
            <person name="Purnelle B."/>
            <person name="Rasmussen S.W."/>
            <person name="Remacha M.A."/>
            <person name="Revuelta J.L."/>
            <person name="Rieger M."/>
            <person name="Salom D."/>
            <person name="Saluz H.P."/>
            <person name="Saiz J.E."/>
            <person name="Saren A.-M."/>
            <person name="Schaefer M."/>
            <person name="Scharfe M."/>
            <person name="Schmidt E.R."/>
            <person name="Schneider C."/>
            <person name="Scholler P."/>
            <person name="Schwarz S."/>
            <person name="Soler-Mira A."/>
            <person name="Urrestarazu L.A."/>
            <person name="Verhasselt P."/>
            <person name="Vissers S."/>
            <person name="Voet M."/>
            <person name="Volckaert G."/>
            <person name="Wagner G."/>
            <person name="Wambutt R."/>
            <person name="Wedler E."/>
            <person name="Wedler H."/>
            <person name="Woelfl S."/>
            <person name="Harris D.E."/>
            <person name="Bowman S."/>
            <person name="Brown D."/>
            <person name="Churcher C.M."/>
            <person name="Connor R."/>
            <person name="Dedman K."/>
            <person name="Gentles S."/>
            <person name="Hamlin N."/>
            <person name="Hunt S."/>
            <person name="Jones L."/>
            <person name="McDonald S."/>
            <person name="Murphy L.D."/>
            <person name="Niblett D."/>
            <person name="Odell C."/>
            <person name="Oliver K."/>
            <person name="Rajandream M.A."/>
            <person name="Richards C."/>
            <person name="Shore L."/>
            <person name="Walsh S.V."/>
            <person name="Barrell B.G."/>
            <person name="Dietrich F.S."/>
            <person name="Mulligan J.T."/>
            <person name="Allen E."/>
            <person name="Araujo R."/>
            <person name="Aviles E."/>
            <person name="Berno A."/>
            <person name="Carpenter J."/>
            <person name="Chen E."/>
            <person name="Cherry J.M."/>
            <person name="Chung E."/>
            <person name="Duncan M."/>
            <person name="Hunicke-Smith S."/>
            <person name="Hyman R.W."/>
            <person name="Komp C."/>
            <person name="Lashkari D."/>
            <person name="Lew H."/>
            <person name="Lin D."/>
            <person name="Mosedale D."/>
            <person name="Nakahara K."/>
            <person name="Namath A."/>
            <person name="Oefner P."/>
            <person name="Oh C."/>
            <person name="Petel F.X."/>
            <person name="Roberts D."/>
            <person name="Schramm S."/>
            <person name="Schroeder M."/>
            <person name="Shogren T."/>
            <person name="Shroff N."/>
            <person name="Winant A."/>
            <person name="Yelton M.A."/>
            <person name="Botstein D."/>
            <person name="Davis R.W."/>
            <person name="Johnston M."/>
            <person name="Andrews S."/>
            <person name="Brinkman R."/>
            <person name="Cooper J."/>
            <person name="Ding H."/>
            <person name="Du Z."/>
            <person name="Favello A."/>
            <person name="Fulton L."/>
            <person name="Gattung S."/>
            <person name="Greco T."/>
            <person name="Hallsworth K."/>
            <person name="Hawkins J."/>
            <person name="Hillier L.W."/>
            <person name="Jier M."/>
            <person name="Johnson D."/>
            <person name="Johnston L."/>
            <person name="Kirsten J."/>
            <person name="Kucaba T."/>
            <person name="Langston Y."/>
            <person name="Latreille P."/>
            <person name="Le T."/>
            <person name="Mardis E."/>
            <person name="Menezes S."/>
            <person name="Miller N."/>
            <person name="Nhan M."/>
            <person name="Pauley A."/>
            <person name="Peluso D."/>
            <person name="Rifkin L."/>
            <person name="Riles L."/>
            <person name="Taich A."/>
            <person name="Trevaskis E."/>
            <person name="Vignati D."/>
            <person name="Wilcox L."/>
            <person name="Wohldman P."/>
            <person name="Vaudin M."/>
            <person name="Wilson R."/>
            <person name="Waterston R."/>
            <person name="Albermann K."/>
            <person name="Hani J."/>
            <person name="Heumann K."/>
            <person name="Kleine K."/>
            <person name="Mewes H.-W."/>
            <person name="Zollner A."/>
            <person name="Zaccaria P."/>
        </authorList>
    </citation>
    <scope>NUCLEOTIDE SEQUENCE [LARGE SCALE GENOMIC DNA]</scope>
    <source>
        <strain>ATCC 204508 / S288c</strain>
    </source>
</reference>
<reference key="4">
    <citation type="journal article" date="2014" name="G3 (Bethesda)">
        <title>The reference genome sequence of Saccharomyces cerevisiae: Then and now.</title>
        <authorList>
            <person name="Engel S.R."/>
            <person name="Dietrich F.S."/>
            <person name="Fisk D.G."/>
            <person name="Binkley G."/>
            <person name="Balakrishnan R."/>
            <person name="Costanzo M.C."/>
            <person name="Dwight S.S."/>
            <person name="Hitz B.C."/>
            <person name="Karra K."/>
            <person name="Nash R.S."/>
            <person name="Weng S."/>
            <person name="Wong E.D."/>
            <person name="Lloyd P."/>
            <person name="Skrzypek M.S."/>
            <person name="Miyasato S.R."/>
            <person name="Simison M."/>
            <person name="Cherry J.M."/>
        </authorList>
    </citation>
    <scope>GENOME REANNOTATION</scope>
    <source>
        <strain>ATCC 204508 / S288c</strain>
    </source>
</reference>
<reference key="5">
    <citation type="journal article" date="2002" name="J. Biol. Chem.">
        <title>A complex of the Srb8, -9, -10, and -11 transcriptional regulatory proteins from yeast.</title>
        <authorList>
            <person name="Borggrefe T."/>
            <person name="Davis R."/>
            <person name="Erdjument-Bromage H."/>
            <person name="Tempst P."/>
            <person name="Kornberg R.D."/>
        </authorList>
    </citation>
    <scope>IDENTIFICATION IN THE SRB8-11 COMPLEX</scope>
    <scope>FUNCTION OF THE SRB8-11 COMPLEX</scope>
</reference>
<reference key="6">
    <citation type="journal article" date="2004" name="Mol. Cell">
        <title>The Ras/PKA signaling pathway directly targets the Srb9 protein, a component of the general RNA polymerase II transcription apparatus.</title>
        <authorList>
            <person name="Chang Y.-W."/>
            <person name="Howard S.C."/>
            <person name="Herman P.K."/>
        </authorList>
    </citation>
    <scope>FUNCTION</scope>
    <scope>PHOSPHORYLATION AT SER-608 BY PKA</scope>
    <scope>MUTAGENESIS OF SER-608 AND SER-1236</scope>
</reference>
<reference key="7">
    <citation type="journal article" date="2004" name="Nucleic Acids Res.">
        <title>A high resolution protein interaction map of the yeast Mediator complex.</title>
        <authorList>
            <person name="Guglielmi B."/>
            <person name="van Berkum N.L."/>
            <person name="Klapholz B."/>
            <person name="Bijma T."/>
            <person name="Boube M."/>
            <person name="Boschiero C."/>
            <person name="Bourbon H.-M."/>
            <person name="Holstege F.C.P."/>
            <person name="Werner M."/>
        </authorList>
    </citation>
    <scope>TOPOLOGY OF THE MEDIATOR COMPLEX</scope>
</reference>
<reference key="8">
    <citation type="journal article" date="2005" name="J. Biol. Chem.">
        <title>Mediator and TFIIH govern carboxyl-terminal domain-dependent transcription in yeast extracts.</title>
        <authorList>
            <person name="Nair D."/>
            <person name="Kim Y."/>
            <person name="Myers L.C."/>
        </authorList>
    </citation>
    <scope>FUNCTION OF THE MEDIATOR COMPLEX</scope>
</reference>
<reference key="9">
    <citation type="journal article" date="2005" name="Mol. Cell">
        <title>Mediator expression profiling epistasis reveals a signal transduction pathway with antagonistic submodules and highly specific downstream targets.</title>
        <authorList>
            <person name="van de Peppel J."/>
            <person name="Kettelarij N."/>
            <person name="van Bakel H."/>
            <person name="Kockelkorn T.T.J.P."/>
            <person name="van Leenen D."/>
            <person name="Holstege F.C.P."/>
        </authorList>
    </citation>
    <scope>FUNCTION</scope>
</reference>
<reference key="10">
    <citation type="journal article" date="2005" name="Mol. Cell. Biol.">
        <title>The Saccharomyces cerevisiae Srb8-Srb11 complex functions with the SAGA complex during Gal4-activated transcription.</title>
        <authorList>
            <person name="Larschan E."/>
            <person name="Winston F."/>
        </authorList>
    </citation>
    <scope>FUNCTION OF THE SRB8-11 COMPLEX</scope>
</reference>
<reference key="11">
    <citation type="journal article" date="2006" name="Mol. Cell">
        <title>Genome-wide location of the coactivator mediator: binding without activation and transient Cdk8 interaction on DNA.</title>
        <authorList>
            <person name="Andrau J.-C."/>
            <person name="van de Pasch L."/>
            <person name="Lijnzaad P."/>
            <person name="Bijma T."/>
            <person name="Koerkamp M.G."/>
            <person name="van de Peppel J."/>
            <person name="Werner M."/>
            <person name="Holstege F.C.P."/>
        </authorList>
    </citation>
    <scope>FUNCTION</scope>
</reference>
<reference key="12">
    <citation type="journal article" date="2007" name="J. Proteome Res.">
        <title>Large-scale phosphorylation analysis of alpha-factor-arrested Saccharomyces cerevisiae.</title>
        <authorList>
            <person name="Li X."/>
            <person name="Gerber S.A."/>
            <person name="Rudner A.D."/>
            <person name="Beausoleil S.A."/>
            <person name="Haas W."/>
            <person name="Villen J."/>
            <person name="Elias J.E."/>
            <person name="Gygi S.P."/>
        </authorList>
    </citation>
    <scope>PHOSPHORYLATION [LARGE SCALE ANALYSIS] AT SER-370 AND SER-375</scope>
    <scope>IDENTIFICATION BY MASS SPECTROMETRY [LARGE SCALE ANALYSIS]</scope>
    <source>
        <strain>ADR376</strain>
    </source>
</reference>
<reference key="13">
    <citation type="journal article" date="2008" name="Mol. Cell. Proteomics">
        <title>A multidimensional chromatography technology for in-depth phosphoproteome analysis.</title>
        <authorList>
            <person name="Albuquerque C.P."/>
            <person name="Smolka M.B."/>
            <person name="Payne S.H."/>
            <person name="Bafna V."/>
            <person name="Eng J."/>
            <person name="Zhou H."/>
        </authorList>
    </citation>
    <scope>PHOSPHORYLATION [LARGE SCALE ANALYSIS] AT SER-375; SER-425; SER-636 AND SER-748</scope>
    <scope>IDENTIFICATION BY MASS SPECTROMETRY [LARGE SCALE ANALYSIS]</scope>
</reference>
<reference key="14">
    <citation type="journal article" date="2009" name="Science">
        <title>Global analysis of Cdk1 substrate phosphorylation sites provides insights into evolution.</title>
        <authorList>
            <person name="Holt L.J."/>
            <person name="Tuch B.B."/>
            <person name="Villen J."/>
            <person name="Johnson A.D."/>
            <person name="Gygi S.P."/>
            <person name="Morgan D.O."/>
        </authorList>
    </citation>
    <scope>PHOSPHORYLATION [LARGE SCALE ANALYSIS] AT SER-375; THR-601 AND SER-608</scope>
    <scope>IDENTIFICATION BY MASS SPECTROMETRY [LARGE SCALE ANALYSIS]</scope>
</reference>
<protein>
    <recommendedName>
        <fullName>Mediator of RNA polymerase II transcription subunit 13</fullName>
    </recommendedName>
    <alternativeName>
        <fullName>Mediator complex subunit 13</fullName>
    </alternativeName>
    <alternativeName>
        <fullName>Protein SCA1</fullName>
    </alternativeName>
    <alternativeName>
        <fullName>Suppressor of RNA polymerase B SSN2</fullName>
    </alternativeName>
</protein>
<dbReference type="EMBL" id="U23812">
    <property type="protein sequence ID" value="AAA91316.1"/>
    <property type="molecule type" value="Genomic_DNA"/>
</dbReference>
<dbReference type="EMBL" id="U09176">
    <property type="protein sequence ID" value="AAA18614.1"/>
    <property type="molecule type" value="Unassigned_DNA"/>
</dbReference>
<dbReference type="EMBL" id="U33007">
    <property type="protein sequence ID" value="AAB64875.1"/>
    <property type="molecule type" value="Genomic_DNA"/>
</dbReference>
<dbReference type="EMBL" id="BK006938">
    <property type="protein sequence ID" value="DAA12279.1"/>
    <property type="molecule type" value="Genomic_DNA"/>
</dbReference>
<dbReference type="PIR" id="B57062">
    <property type="entry name" value="B57062"/>
</dbReference>
<dbReference type="RefSeq" id="NP_010731.3">
    <property type="nucleotide sequence ID" value="NM_001180751.3"/>
</dbReference>
<dbReference type="PDB" id="7KPV">
    <property type="method" value="EM"/>
    <property type="resolution" value="3.80 A"/>
    <property type="chains" value="D=1-1420"/>
</dbReference>
<dbReference type="PDB" id="7KPX">
    <property type="method" value="EM"/>
    <property type="resolution" value="4.40 A"/>
    <property type="chains" value="D=1-1420"/>
</dbReference>
<dbReference type="PDBsum" id="7KPV"/>
<dbReference type="PDBsum" id="7KPX"/>
<dbReference type="EMDB" id="EMD-22989"/>
<dbReference type="EMDB" id="EMD-22991"/>
<dbReference type="SMR" id="P38931"/>
<dbReference type="BioGRID" id="32498">
    <property type="interactions" value="400"/>
</dbReference>
<dbReference type="ComplexPortal" id="CPX-1853">
    <property type="entry name" value="CKM complex"/>
</dbReference>
<dbReference type="DIP" id="DIP-5947N"/>
<dbReference type="FunCoup" id="P38931">
    <property type="interactions" value="178"/>
</dbReference>
<dbReference type="IntAct" id="P38931">
    <property type="interactions" value="27"/>
</dbReference>
<dbReference type="MINT" id="P38931"/>
<dbReference type="STRING" id="4932.YDR443C"/>
<dbReference type="GlyGen" id="P38931">
    <property type="glycosylation" value="5 sites, 1 O-linked glycan (2 sites)"/>
</dbReference>
<dbReference type="iPTMnet" id="P38931"/>
<dbReference type="PaxDb" id="4932-YDR443C"/>
<dbReference type="PeptideAtlas" id="P38931"/>
<dbReference type="EnsemblFungi" id="YDR443C_mRNA">
    <property type="protein sequence ID" value="YDR443C"/>
    <property type="gene ID" value="YDR443C"/>
</dbReference>
<dbReference type="GeneID" id="852053"/>
<dbReference type="KEGG" id="sce:YDR443C"/>
<dbReference type="AGR" id="SGD:S000002851"/>
<dbReference type="SGD" id="S000002851">
    <property type="gene designation" value="SSN2"/>
</dbReference>
<dbReference type="VEuPathDB" id="FungiDB:YDR443C"/>
<dbReference type="eggNOG" id="KOG3600">
    <property type="taxonomic scope" value="Eukaryota"/>
</dbReference>
<dbReference type="GeneTree" id="ENSGT00390000007801"/>
<dbReference type="HOGENOM" id="CLU_242296_0_0_1"/>
<dbReference type="InParanoid" id="P38931"/>
<dbReference type="OMA" id="FSRELWC"/>
<dbReference type="OrthoDB" id="103819at2759"/>
<dbReference type="BioCyc" id="YEAST:G3O-29975-MONOMER"/>
<dbReference type="BioGRID-ORCS" id="852053">
    <property type="hits" value="0 hits in 10 CRISPR screens"/>
</dbReference>
<dbReference type="PRO" id="PR:P38931"/>
<dbReference type="Proteomes" id="UP000002311">
    <property type="component" value="Chromosome IV"/>
</dbReference>
<dbReference type="RNAct" id="P38931">
    <property type="molecule type" value="protein"/>
</dbReference>
<dbReference type="GO" id="GO:1990508">
    <property type="term" value="C:CKM complex"/>
    <property type="evidence" value="ECO:0000353"/>
    <property type="project" value="ComplexPortal"/>
</dbReference>
<dbReference type="GO" id="GO:0016592">
    <property type="term" value="C:mediator complex"/>
    <property type="evidence" value="ECO:0000314"/>
    <property type="project" value="SGD"/>
</dbReference>
<dbReference type="GO" id="GO:0030332">
    <property type="term" value="F:cyclin binding"/>
    <property type="evidence" value="ECO:0000314"/>
    <property type="project" value="SGD"/>
</dbReference>
<dbReference type="GO" id="GO:0003713">
    <property type="term" value="F:transcription coactivator activity"/>
    <property type="evidence" value="ECO:0000314"/>
    <property type="project" value="SGD"/>
</dbReference>
<dbReference type="GO" id="GO:0000122">
    <property type="term" value="P:negative regulation of transcription by RNA polymerase II"/>
    <property type="evidence" value="ECO:0000315"/>
    <property type="project" value="SGD"/>
</dbReference>
<dbReference type="GO" id="GO:0045944">
    <property type="term" value="P:positive regulation of transcription by RNA polymerase II"/>
    <property type="evidence" value="ECO:0000314"/>
    <property type="project" value="SGD"/>
</dbReference>
<dbReference type="InterPro" id="IPR009401">
    <property type="entry name" value="Med13_C"/>
</dbReference>
<dbReference type="InterPro" id="IPR051139">
    <property type="entry name" value="Mediator_complx_sub13"/>
</dbReference>
<dbReference type="InterPro" id="IPR021643">
    <property type="entry name" value="Mediator_Med13_N"/>
</dbReference>
<dbReference type="PANTHER" id="PTHR48249">
    <property type="entry name" value="MEDIATOR OF RNA POLYMERASE II TRANSCRIPTION SUBUNIT 13"/>
    <property type="match status" value="1"/>
</dbReference>
<dbReference type="PANTHER" id="PTHR48249:SF3">
    <property type="entry name" value="MEDIATOR OF RNA POLYMERASE II TRANSCRIPTION SUBUNIT 13"/>
    <property type="match status" value="1"/>
</dbReference>
<dbReference type="Pfam" id="PF06333">
    <property type="entry name" value="Med13_C"/>
    <property type="match status" value="2"/>
</dbReference>
<dbReference type="Pfam" id="PF11597">
    <property type="entry name" value="Med13_N"/>
    <property type="match status" value="1"/>
</dbReference>
<feature type="chain" id="PRO_0000072215" description="Mediator of RNA polymerase II transcription subunit 13">
    <location>
        <begin position="1"/>
        <end position="1420"/>
    </location>
</feature>
<feature type="region of interest" description="Disordered" evidence="1">
    <location>
        <begin position="416"/>
        <end position="511"/>
    </location>
</feature>
<feature type="region of interest" description="Disordered" evidence="1">
    <location>
        <begin position="653"/>
        <end position="691"/>
    </location>
</feature>
<feature type="compositionally biased region" description="Polar residues" evidence="1">
    <location>
        <begin position="416"/>
        <end position="427"/>
    </location>
</feature>
<feature type="compositionally biased region" description="Basic and acidic residues" evidence="1">
    <location>
        <begin position="429"/>
        <end position="439"/>
    </location>
</feature>
<feature type="compositionally biased region" description="Polar residues" evidence="1">
    <location>
        <begin position="440"/>
        <end position="453"/>
    </location>
</feature>
<feature type="compositionally biased region" description="Basic and acidic residues" evidence="1">
    <location>
        <begin position="454"/>
        <end position="484"/>
    </location>
</feature>
<feature type="compositionally biased region" description="Low complexity" evidence="1">
    <location>
        <begin position="494"/>
        <end position="508"/>
    </location>
</feature>
<feature type="compositionally biased region" description="Acidic residues" evidence="1">
    <location>
        <begin position="655"/>
        <end position="669"/>
    </location>
</feature>
<feature type="compositionally biased region" description="Basic and acidic residues" evidence="1">
    <location>
        <begin position="670"/>
        <end position="683"/>
    </location>
</feature>
<feature type="modified residue" description="Phosphoserine" evidence="9">
    <location>
        <position position="370"/>
    </location>
</feature>
<feature type="modified residue" description="Phosphoserine" evidence="9 10 11">
    <location>
        <position position="375"/>
    </location>
</feature>
<feature type="modified residue" description="Phosphoserine" evidence="10">
    <location>
        <position position="425"/>
    </location>
</feature>
<feature type="modified residue" description="Phosphothreonine" evidence="11">
    <location>
        <position position="601"/>
    </location>
</feature>
<feature type="modified residue" description="Phosphoserine; by PKA" evidence="3 11">
    <location>
        <position position="608"/>
    </location>
</feature>
<feature type="modified residue" description="Phosphoserine" evidence="10">
    <location>
        <position position="636"/>
    </location>
</feature>
<feature type="modified residue" description="Phosphoserine" evidence="10">
    <location>
        <position position="748"/>
    </location>
</feature>
<feature type="mutagenesis site" description="Loss of function; when associated with A-1236." evidence="3">
    <original>S</original>
    <variation>A</variation>
    <location>
        <position position="608"/>
    </location>
</feature>
<feature type="mutagenesis site" description="Loss of function; when associated with A-608." evidence="3">
    <original>S</original>
    <variation>A</variation>
    <location>
        <position position="1236"/>
    </location>
</feature>
<feature type="sequence conflict" description="In Ref. 2; AAA18614." evidence="8" ref="2">
    <original>D</original>
    <variation>E</variation>
    <location>
        <position position="38"/>
    </location>
</feature>
<feature type="sequence conflict" description="In Ref. 2; AAA18614." evidence="8" ref="2">
    <original>E</original>
    <variation>V</variation>
    <location>
        <position position="812"/>
    </location>
</feature>
<feature type="sequence conflict" description="In Ref. 2; AAA18614." evidence="8" ref="2">
    <original>T</original>
    <variation>S</variation>
    <location>
        <position position="859"/>
    </location>
</feature>
<feature type="sequence conflict" description="In Ref. 2; AAA18614." evidence="8" ref="2">
    <original>VK</original>
    <variation>GE</variation>
    <location>
        <begin position="877"/>
        <end position="878"/>
    </location>
</feature>
<feature type="sequence conflict" description="In Ref. 2; AAA18614." evidence="8" ref="2">
    <original>T</original>
    <variation>P</variation>
    <location>
        <position position="887"/>
    </location>
</feature>
<feature type="sequence conflict" description="In Ref. 2; AAA18614." evidence="8" ref="2">
    <original>Y</original>
    <variation>S</variation>
    <location>
        <position position="1284"/>
    </location>
</feature>